<reference key="1">
    <citation type="journal article" date="2005" name="J. Bacteriol.">
        <title>Insights into genome plasticity and pathogenicity of the plant pathogenic Bacterium Xanthomonas campestris pv. vesicatoria revealed by the complete genome sequence.</title>
        <authorList>
            <person name="Thieme F."/>
            <person name="Koebnik R."/>
            <person name="Bekel T."/>
            <person name="Berger C."/>
            <person name="Boch J."/>
            <person name="Buettner D."/>
            <person name="Caldana C."/>
            <person name="Gaigalat L."/>
            <person name="Goesmann A."/>
            <person name="Kay S."/>
            <person name="Kirchner O."/>
            <person name="Lanz C."/>
            <person name="Linke B."/>
            <person name="McHardy A.C."/>
            <person name="Meyer F."/>
            <person name="Mittenhuber G."/>
            <person name="Nies D.H."/>
            <person name="Niesbach-Kloesgen U."/>
            <person name="Patschkowski T."/>
            <person name="Rueckert C."/>
            <person name="Rupp O."/>
            <person name="Schneiker S."/>
            <person name="Schuster S.C."/>
            <person name="Vorhoelter F.J."/>
            <person name="Weber E."/>
            <person name="Puehler A."/>
            <person name="Bonas U."/>
            <person name="Bartels D."/>
            <person name="Kaiser O."/>
        </authorList>
    </citation>
    <scope>NUCLEOTIDE SEQUENCE [LARGE SCALE GENOMIC DNA]</scope>
    <source>
        <strain>85-10</strain>
    </source>
</reference>
<keyword id="KW-0378">Hydrolase</keyword>
<name>APAH_XANE5</name>
<accession>Q3BX84</accession>
<gene>
    <name evidence="1" type="primary">apaH</name>
    <name type="ordered locus">XCV0898</name>
</gene>
<sequence length="318" mass="35377">MSVWAIGDLQGCYDITQRLLEKINFDPAQDTLWFCGDLVNRGGQSLETLRLVHSLRAHSVVVLGNHDLSLLAIGARSEEEQRKVNPDLLRIVMAEDRDALLDWLRMQKLAHVDRTLGWMMIHAGLAPKWTTQMAEKHAREVEQQLQGGGYRKLLRNMYGDQPGWSPGLSGYDRSRAIINLFTRMRYCTPRGRIATDDKGTPGTQAQGLYPWFEVPGRVERDLKIVCGHWSALGLTITQGVHAIDTGAVWGGKLTALQLDSEELRVVQVPGREVTGPAPVARAPRRPRERQGRQRSRGNRGNAGNAAAGPKPSVDTPQD</sequence>
<organism>
    <name type="scientific">Xanthomonas euvesicatoria pv. vesicatoria (strain 85-10)</name>
    <name type="common">Xanthomonas campestris pv. vesicatoria</name>
    <dbReference type="NCBI Taxonomy" id="316273"/>
    <lineage>
        <taxon>Bacteria</taxon>
        <taxon>Pseudomonadati</taxon>
        <taxon>Pseudomonadota</taxon>
        <taxon>Gammaproteobacteria</taxon>
        <taxon>Lysobacterales</taxon>
        <taxon>Lysobacteraceae</taxon>
        <taxon>Xanthomonas</taxon>
    </lineage>
</organism>
<protein>
    <recommendedName>
        <fullName evidence="1">Bis(5'-nucleosyl)-tetraphosphatase, symmetrical</fullName>
        <ecNumber evidence="1">3.6.1.41</ecNumber>
    </recommendedName>
    <alternativeName>
        <fullName evidence="1">Ap4A hydrolase</fullName>
    </alternativeName>
    <alternativeName>
        <fullName evidence="1">Diadenosine 5',5'''-P1,P4-tetraphosphate pyrophosphohydrolase</fullName>
    </alternativeName>
    <alternativeName>
        <fullName evidence="1">Diadenosine tetraphosphatase</fullName>
    </alternativeName>
</protein>
<proteinExistence type="inferred from homology"/>
<dbReference type="EC" id="3.6.1.41" evidence="1"/>
<dbReference type="EMBL" id="AM039952">
    <property type="protein sequence ID" value="CAJ22529.1"/>
    <property type="molecule type" value="Genomic_DNA"/>
</dbReference>
<dbReference type="RefSeq" id="WP_011346478.1">
    <property type="nucleotide sequence ID" value="NZ_CP017190.1"/>
</dbReference>
<dbReference type="SMR" id="Q3BX84"/>
<dbReference type="STRING" id="456327.BJD11_18300"/>
<dbReference type="KEGG" id="xcv:XCV0898"/>
<dbReference type="eggNOG" id="COG0639">
    <property type="taxonomic scope" value="Bacteria"/>
</dbReference>
<dbReference type="HOGENOM" id="CLU_056184_0_0_6"/>
<dbReference type="Proteomes" id="UP000007069">
    <property type="component" value="Chromosome"/>
</dbReference>
<dbReference type="GO" id="GO:0008803">
    <property type="term" value="F:bis(5'-nucleosyl)-tetraphosphatase (symmetrical) activity"/>
    <property type="evidence" value="ECO:0007669"/>
    <property type="project" value="UniProtKB-UniRule"/>
</dbReference>
<dbReference type="CDD" id="cd07422">
    <property type="entry name" value="MPP_ApaH"/>
    <property type="match status" value="1"/>
</dbReference>
<dbReference type="Gene3D" id="3.60.21.10">
    <property type="match status" value="1"/>
</dbReference>
<dbReference type="HAMAP" id="MF_00199">
    <property type="entry name" value="ApaH"/>
    <property type="match status" value="1"/>
</dbReference>
<dbReference type="InterPro" id="IPR004617">
    <property type="entry name" value="ApaH"/>
</dbReference>
<dbReference type="InterPro" id="IPR004843">
    <property type="entry name" value="Calcineurin-like_PHP_ApaH"/>
</dbReference>
<dbReference type="InterPro" id="IPR029052">
    <property type="entry name" value="Metallo-depent_PP-like"/>
</dbReference>
<dbReference type="InterPro" id="IPR006186">
    <property type="entry name" value="Ser/Thr-sp_prot-phosphatase"/>
</dbReference>
<dbReference type="NCBIfam" id="TIGR00668">
    <property type="entry name" value="apaH"/>
    <property type="match status" value="1"/>
</dbReference>
<dbReference type="NCBIfam" id="NF001204">
    <property type="entry name" value="PRK00166.1"/>
    <property type="match status" value="1"/>
</dbReference>
<dbReference type="PANTHER" id="PTHR40942">
    <property type="match status" value="1"/>
</dbReference>
<dbReference type="PANTHER" id="PTHR40942:SF4">
    <property type="entry name" value="CYTOCHROME C5"/>
    <property type="match status" value="1"/>
</dbReference>
<dbReference type="Pfam" id="PF00149">
    <property type="entry name" value="Metallophos"/>
    <property type="match status" value="1"/>
</dbReference>
<dbReference type="PIRSF" id="PIRSF000903">
    <property type="entry name" value="B5n-ttraPtase_sm"/>
    <property type="match status" value="1"/>
</dbReference>
<dbReference type="PRINTS" id="PR00114">
    <property type="entry name" value="STPHPHTASE"/>
</dbReference>
<dbReference type="SUPFAM" id="SSF56300">
    <property type="entry name" value="Metallo-dependent phosphatases"/>
    <property type="match status" value="1"/>
</dbReference>
<feature type="chain" id="PRO_1000012105" description="Bis(5'-nucleosyl)-tetraphosphatase, symmetrical">
    <location>
        <begin position="1"/>
        <end position="318"/>
    </location>
</feature>
<feature type="region of interest" description="Disordered" evidence="2">
    <location>
        <begin position="269"/>
        <end position="318"/>
    </location>
</feature>
<feature type="compositionally biased region" description="Basic residues" evidence="2">
    <location>
        <begin position="282"/>
        <end position="297"/>
    </location>
</feature>
<feature type="compositionally biased region" description="Low complexity" evidence="2">
    <location>
        <begin position="298"/>
        <end position="311"/>
    </location>
</feature>
<comment type="function">
    <text evidence="1">Hydrolyzes diadenosine 5',5'''-P1,P4-tetraphosphate to yield ADP.</text>
</comment>
<comment type="catalytic activity">
    <reaction evidence="1">
        <text>P(1),P(4)-bis(5'-adenosyl) tetraphosphate + H2O = 2 ADP + 2 H(+)</text>
        <dbReference type="Rhea" id="RHEA:24252"/>
        <dbReference type="ChEBI" id="CHEBI:15377"/>
        <dbReference type="ChEBI" id="CHEBI:15378"/>
        <dbReference type="ChEBI" id="CHEBI:58141"/>
        <dbReference type="ChEBI" id="CHEBI:456216"/>
        <dbReference type="EC" id="3.6.1.41"/>
    </reaction>
</comment>
<comment type="similarity">
    <text evidence="1">Belongs to the Ap4A hydrolase family.</text>
</comment>
<evidence type="ECO:0000255" key="1">
    <source>
        <dbReference type="HAMAP-Rule" id="MF_00199"/>
    </source>
</evidence>
<evidence type="ECO:0000256" key="2">
    <source>
        <dbReference type="SAM" id="MobiDB-lite"/>
    </source>
</evidence>